<sequence length="613" mass="70256">MRLLLIHARSFSFEVRDKAVENPEPLTEELKRGSADNTLVVFTTVEENDNDSPSFLERVADDVLDVAGKVKASSVFLYPYAHLSPNLAPPPKAITILNALYETLKGKASIPVYRAPFGWYKAFNISCLGHPLSELSRTITPQESAPQRKPYTRDYYVIVSPDGSIHDPASYSFSERDADLKVLVDKEVFKRELEGKEQPRYIDYCLKFGFEWEPLSDVGHMRYGPYATVMLELLDDYSYQVAKSLGIPVFKVKGTNMFRLSDKAISEHAGLFGERMYITESDEELVMRYAACFQQFAMIKDWVLSYRNLPLGMLEIADSYRYEQPGETVLCFRLRRFYMPDLHIFVKDLKEAMDVGLRLHAKIFEEIRRIGRDYVSLYNVSKEFFDQNKDYLVELARREGKPILVRVLEGAKYYWVLNVEYHIIDELKRPREIATFQFDIGNAQRFGIKYRDEGNNIKYPVIIHTAILGSIERFIFALLDTAAINEANGKVPALPTWITPVQVRVIPVSSGYNEGAIELARRIEEAGFRVEVDDRDETVGRKIRDAETLWVPYIVVFGEREAKTGSLSVRVRGVGQVSMSIEELLNRLNEETKGYPRKPLTAPMLLSIRPPLP</sequence>
<reference key="1">
    <citation type="submission" date="2007-10" db="EMBL/GenBank/DDBJ databases">
        <title>Complete sequence of Caldivirga maquilingensis IC-167.</title>
        <authorList>
            <consortium name="US DOE Joint Genome Institute"/>
            <person name="Copeland A."/>
            <person name="Lucas S."/>
            <person name="Lapidus A."/>
            <person name="Barry K."/>
            <person name="Glavina del Rio T."/>
            <person name="Dalin E."/>
            <person name="Tice H."/>
            <person name="Pitluck S."/>
            <person name="Saunders E."/>
            <person name="Brettin T."/>
            <person name="Bruce D."/>
            <person name="Detter J.C."/>
            <person name="Han C."/>
            <person name="Schmutz J."/>
            <person name="Larimer F."/>
            <person name="Land M."/>
            <person name="Hauser L."/>
            <person name="Kyrpides N."/>
            <person name="Ivanova N."/>
            <person name="Biddle J.F."/>
            <person name="Zhang Z."/>
            <person name="Fitz-Gibbon S.T."/>
            <person name="Lowe T.M."/>
            <person name="Saltikov C."/>
            <person name="House C.H."/>
            <person name="Richardson P."/>
        </authorList>
    </citation>
    <scope>NUCLEOTIDE SEQUENCE [LARGE SCALE GENOMIC DNA]</scope>
    <source>
        <strain>ATCC 700844 / DSM 13496 / JCM 10307 / IC-167</strain>
    </source>
</reference>
<gene>
    <name evidence="1" type="primary">thrS</name>
    <name type="ordered locus">Cmaq_0493</name>
</gene>
<dbReference type="EC" id="6.1.1.3" evidence="1"/>
<dbReference type="EMBL" id="CP000852">
    <property type="protein sequence ID" value="ABW01338.1"/>
    <property type="molecule type" value="Genomic_DNA"/>
</dbReference>
<dbReference type="RefSeq" id="WP_012185558.1">
    <property type="nucleotide sequence ID" value="NC_009954.1"/>
</dbReference>
<dbReference type="SMR" id="A8MBZ5"/>
<dbReference type="STRING" id="397948.Cmaq_0493"/>
<dbReference type="GeneID" id="5709874"/>
<dbReference type="KEGG" id="cma:Cmaq_0493"/>
<dbReference type="eggNOG" id="arCOG00401">
    <property type="taxonomic scope" value="Archaea"/>
</dbReference>
<dbReference type="HOGENOM" id="CLU_029833_0_0_2"/>
<dbReference type="OrthoDB" id="372136at2157"/>
<dbReference type="Proteomes" id="UP000001137">
    <property type="component" value="Chromosome"/>
</dbReference>
<dbReference type="GO" id="GO:0005737">
    <property type="term" value="C:cytoplasm"/>
    <property type="evidence" value="ECO:0007669"/>
    <property type="project" value="UniProtKB-SubCell"/>
</dbReference>
<dbReference type="GO" id="GO:0005524">
    <property type="term" value="F:ATP binding"/>
    <property type="evidence" value="ECO:0007669"/>
    <property type="project" value="UniProtKB-UniRule"/>
</dbReference>
<dbReference type="GO" id="GO:0004829">
    <property type="term" value="F:threonine-tRNA ligase activity"/>
    <property type="evidence" value="ECO:0007669"/>
    <property type="project" value="UniProtKB-UniRule"/>
</dbReference>
<dbReference type="GO" id="GO:0000049">
    <property type="term" value="F:tRNA binding"/>
    <property type="evidence" value="ECO:0007669"/>
    <property type="project" value="UniProtKB-KW"/>
</dbReference>
<dbReference type="GO" id="GO:0008270">
    <property type="term" value="F:zinc ion binding"/>
    <property type="evidence" value="ECO:0007669"/>
    <property type="project" value="InterPro"/>
</dbReference>
<dbReference type="GO" id="GO:0006435">
    <property type="term" value="P:threonyl-tRNA aminoacylation"/>
    <property type="evidence" value="ECO:0007669"/>
    <property type="project" value="UniProtKB-UniRule"/>
</dbReference>
<dbReference type="CDD" id="cd00860">
    <property type="entry name" value="ThrRS_anticodon"/>
    <property type="match status" value="1"/>
</dbReference>
<dbReference type="FunFam" id="3.40.50.800:FF:000001">
    <property type="entry name" value="Threonine--tRNA ligase"/>
    <property type="match status" value="1"/>
</dbReference>
<dbReference type="Gene3D" id="3.40.50.800">
    <property type="entry name" value="Anticodon-binding domain"/>
    <property type="match status" value="1"/>
</dbReference>
<dbReference type="Gene3D" id="3.30.930.10">
    <property type="entry name" value="Bira Bifunctional Protein, Domain 2"/>
    <property type="match status" value="1"/>
</dbReference>
<dbReference type="Gene3D" id="3.50.80.10">
    <property type="entry name" value="D-tyrosyl-tRNA(Tyr) deacylase"/>
    <property type="match status" value="1"/>
</dbReference>
<dbReference type="HAMAP" id="MF_00184">
    <property type="entry name" value="Thr_tRNA_synth"/>
    <property type="match status" value="1"/>
</dbReference>
<dbReference type="InterPro" id="IPR002314">
    <property type="entry name" value="aa-tRNA-synt_IIb"/>
</dbReference>
<dbReference type="InterPro" id="IPR006195">
    <property type="entry name" value="aa-tRNA-synth_II"/>
</dbReference>
<dbReference type="InterPro" id="IPR045864">
    <property type="entry name" value="aa-tRNA-synth_II/BPL/LPL"/>
</dbReference>
<dbReference type="InterPro" id="IPR004154">
    <property type="entry name" value="Anticodon-bd"/>
</dbReference>
<dbReference type="InterPro" id="IPR036621">
    <property type="entry name" value="Anticodon-bd_dom_sf"/>
</dbReference>
<dbReference type="InterPro" id="IPR023509">
    <property type="entry name" value="DTD-like_sf"/>
</dbReference>
<dbReference type="InterPro" id="IPR002320">
    <property type="entry name" value="Thr-tRNA-ligase_IIa"/>
</dbReference>
<dbReference type="InterPro" id="IPR015011">
    <property type="entry name" value="Threonyl-tRNA_syn_edit_dom_arc"/>
</dbReference>
<dbReference type="InterPro" id="IPR047246">
    <property type="entry name" value="ThrRS_anticodon"/>
</dbReference>
<dbReference type="NCBIfam" id="NF003068">
    <property type="entry name" value="PRK03991.1"/>
    <property type="match status" value="1"/>
</dbReference>
<dbReference type="PANTHER" id="PTHR11451:SF44">
    <property type="entry name" value="THREONINE--TRNA LIGASE, CHLOROPLASTIC_MITOCHONDRIAL 2"/>
    <property type="match status" value="1"/>
</dbReference>
<dbReference type="PANTHER" id="PTHR11451">
    <property type="entry name" value="THREONINE-TRNA LIGASE"/>
    <property type="match status" value="1"/>
</dbReference>
<dbReference type="Pfam" id="PF03129">
    <property type="entry name" value="HGTP_anticodon"/>
    <property type="match status" value="1"/>
</dbReference>
<dbReference type="Pfam" id="PF00587">
    <property type="entry name" value="tRNA-synt_2b"/>
    <property type="match status" value="1"/>
</dbReference>
<dbReference type="Pfam" id="PF08915">
    <property type="entry name" value="tRNA-Thr_ED"/>
    <property type="match status" value="1"/>
</dbReference>
<dbReference type="PRINTS" id="PR01047">
    <property type="entry name" value="TRNASYNTHTHR"/>
</dbReference>
<dbReference type="SUPFAM" id="SSF52954">
    <property type="entry name" value="Class II aaRS ABD-related"/>
    <property type="match status" value="1"/>
</dbReference>
<dbReference type="SUPFAM" id="SSF55681">
    <property type="entry name" value="Class II aaRS and biotin synthetases"/>
    <property type="match status" value="1"/>
</dbReference>
<dbReference type="PROSITE" id="PS50862">
    <property type="entry name" value="AA_TRNA_LIGASE_II"/>
    <property type="match status" value="1"/>
</dbReference>
<comment type="function">
    <text evidence="1">Catalyzes the attachment of threonine to tRNA(Thr) in a two-step reaction: L-threonine is first activated by ATP to form Thr-AMP and then transferred to the acceptor end of tRNA(Thr). Also edits incorrectly charged L-seryl-tRNA(Thr).</text>
</comment>
<comment type="catalytic activity">
    <reaction evidence="1">
        <text>tRNA(Thr) + L-threonine + ATP = L-threonyl-tRNA(Thr) + AMP + diphosphate + H(+)</text>
        <dbReference type="Rhea" id="RHEA:24624"/>
        <dbReference type="Rhea" id="RHEA-COMP:9670"/>
        <dbReference type="Rhea" id="RHEA-COMP:9704"/>
        <dbReference type="ChEBI" id="CHEBI:15378"/>
        <dbReference type="ChEBI" id="CHEBI:30616"/>
        <dbReference type="ChEBI" id="CHEBI:33019"/>
        <dbReference type="ChEBI" id="CHEBI:57926"/>
        <dbReference type="ChEBI" id="CHEBI:78442"/>
        <dbReference type="ChEBI" id="CHEBI:78534"/>
        <dbReference type="ChEBI" id="CHEBI:456215"/>
        <dbReference type="EC" id="6.1.1.3"/>
    </reaction>
</comment>
<comment type="cofactor">
    <cofactor evidence="1">
        <name>Zn(2+)</name>
        <dbReference type="ChEBI" id="CHEBI:29105"/>
    </cofactor>
    <text evidence="1">Binds 1 zinc ion per subunit.</text>
</comment>
<comment type="subunit">
    <text evidence="1">Homodimer.</text>
</comment>
<comment type="subcellular location">
    <subcellularLocation>
        <location evidence="1">Cytoplasm</location>
    </subcellularLocation>
</comment>
<comment type="domain">
    <text evidence="1">The N-terminal domain is an archaea-specific tRNA-editing domain that hydrolyzes incorrectly charged L-seryl-tRNA(Thr). Catalysis of tRNA editing is performed by the charged tRNA itself.</text>
</comment>
<comment type="similarity">
    <text evidence="1">Belongs to the class-II aminoacyl-tRNA synthetase family.</text>
</comment>
<evidence type="ECO:0000255" key="1">
    <source>
        <dbReference type="HAMAP-Rule" id="MF_00184"/>
    </source>
</evidence>
<protein>
    <recommendedName>
        <fullName evidence="1">Threonine--tRNA ligase</fullName>
        <ecNumber evidence="1">6.1.1.3</ecNumber>
    </recommendedName>
    <alternativeName>
        <fullName evidence="1">Threonyl-tRNA synthetase</fullName>
        <shortName evidence="1">ThrRS</shortName>
    </alternativeName>
</protein>
<organism>
    <name type="scientific">Caldivirga maquilingensis (strain ATCC 700844 / DSM 13496 / JCM 10307 / IC-167)</name>
    <dbReference type="NCBI Taxonomy" id="397948"/>
    <lineage>
        <taxon>Archaea</taxon>
        <taxon>Thermoproteota</taxon>
        <taxon>Thermoprotei</taxon>
        <taxon>Thermoproteales</taxon>
        <taxon>Thermoproteaceae</taxon>
        <taxon>Caldivirga</taxon>
    </lineage>
</organism>
<proteinExistence type="inferred from homology"/>
<keyword id="KW-0030">Aminoacyl-tRNA synthetase</keyword>
<keyword id="KW-0067">ATP-binding</keyword>
<keyword id="KW-0963">Cytoplasm</keyword>
<keyword id="KW-0436">Ligase</keyword>
<keyword id="KW-0479">Metal-binding</keyword>
<keyword id="KW-0547">Nucleotide-binding</keyword>
<keyword id="KW-0648">Protein biosynthesis</keyword>
<keyword id="KW-1185">Reference proteome</keyword>
<keyword id="KW-0694">RNA-binding</keyword>
<keyword id="KW-0820">tRNA-binding</keyword>
<keyword id="KW-0862">Zinc</keyword>
<name>SYT_CALMQ</name>
<feature type="chain" id="PRO_1000077350" description="Threonine--tRNA ligase">
    <location>
        <begin position="1"/>
        <end position="613"/>
    </location>
</feature>
<feature type="region of interest" description="Editing domain" evidence="1">
    <location>
        <begin position="1"/>
        <end position="147"/>
    </location>
</feature>
<feature type="region of interest" description="Catalytic" evidence="1">
    <location>
        <begin position="199"/>
        <end position="495"/>
    </location>
</feature>
<feature type="region of interest" description="Catalytic">
    <location>
        <begin position="200"/>
        <end position="495"/>
    </location>
</feature>
<feature type="binding site" evidence="1">
    <location>
        <position position="292"/>
    </location>
    <ligand>
        <name>Zn(2+)</name>
        <dbReference type="ChEBI" id="CHEBI:29105"/>
    </ligand>
</feature>
<feature type="binding site" evidence="1">
    <location>
        <position position="343"/>
    </location>
    <ligand>
        <name>Zn(2+)</name>
        <dbReference type="ChEBI" id="CHEBI:29105"/>
    </ligand>
</feature>
<feature type="binding site" evidence="1">
    <location>
        <position position="464"/>
    </location>
    <ligand>
        <name>Zn(2+)</name>
        <dbReference type="ChEBI" id="CHEBI:29105"/>
    </ligand>
</feature>
<accession>A8MBZ5</accession>